<feature type="chain" id="PRO_0000433425" description="Sorting nexin-14">
    <location>
        <begin position="1"/>
        <end position="934"/>
    </location>
</feature>
<feature type="transmembrane region" description="Helical" evidence="3">
    <location>
        <begin position="27"/>
        <end position="47"/>
    </location>
</feature>
<feature type="transmembrane region" description="Helical" evidence="3">
    <location>
        <begin position="48"/>
        <end position="68"/>
    </location>
</feature>
<feature type="domain" description="PXA" evidence="6">
    <location>
        <begin position="129"/>
        <end position="303"/>
    </location>
</feature>
<feature type="domain" description="RGS" evidence="5">
    <location>
        <begin position="335"/>
        <end position="467"/>
    </location>
</feature>
<feature type="domain" description="PX" evidence="4">
    <location>
        <begin position="557"/>
        <end position="677"/>
    </location>
</feature>
<feature type="sequence conflict" description="In Ref. 2; AAI29211." evidence="8" ref="2">
    <original>D</original>
    <variation>E</variation>
    <location>
        <position position="383"/>
    </location>
</feature>
<comment type="function">
    <text evidence="1 2 7">Plays a role in maintaining normal neuronal excitability and synaptic transmission. May be involved in several stages of intracellular trafficking (By similarity). Required for autophagosome clearance, possibly by mediating the fusion of lysosomes with autophagosomes (PubMed:25848753). Binds phosphatidylinositol 3,5-bisphosphate (PtdIns(3,5)P2), a key component of late endosomes/lysosomes. Does not bind phosphatidylinositol 3-phosphate (PtdIns(3P)) (By similarity).</text>
</comment>
<comment type="subcellular location">
    <subcellularLocation>
        <location evidence="2">Lysosome membrane</location>
        <topology evidence="8">Multi-pass membrane protein</topology>
    </subcellularLocation>
    <subcellularLocation>
        <location evidence="2">Late endosome membrane</location>
        <topology evidence="8">Multi-pass membrane protein</topology>
    </subcellularLocation>
    <subcellularLocation>
        <location evidence="1">Cell projection</location>
        <location evidence="1">Dendrite</location>
    </subcellularLocation>
</comment>
<comment type="disruption phenotype">
    <text evidence="7">Loss of neural tissue volume: neuronal cell death is associated with impaired autophagic degradation.</text>
</comment>
<comment type="similarity">
    <text evidence="8">Belongs to the sorting nexin family.</text>
</comment>
<gene>
    <name evidence="10" type="primary">snx14</name>
</gene>
<organism>
    <name type="scientific">Danio rerio</name>
    <name type="common">Zebrafish</name>
    <name type="synonym">Brachydanio rerio</name>
    <dbReference type="NCBI Taxonomy" id="7955"/>
    <lineage>
        <taxon>Eukaryota</taxon>
        <taxon>Metazoa</taxon>
        <taxon>Chordata</taxon>
        <taxon>Craniata</taxon>
        <taxon>Vertebrata</taxon>
        <taxon>Euteleostomi</taxon>
        <taxon>Actinopterygii</taxon>
        <taxon>Neopterygii</taxon>
        <taxon>Teleostei</taxon>
        <taxon>Ostariophysi</taxon>
        <taxon>Cypriniformes</taxon>
        <taxon>Danionidae</taxon>
        <taxon>Danioninae</taxon>
        <taxon>Danio</taxon>
    </lineage>
</organism>
<reference key="1">
    <citation type="journal article" date="2013" name="Nature">
        <title>The zebrafish reference genome sequence and its relationship to the human genome.</title>
        <authorList>
            <person name="Howe K."/>
            <person name="Clark M.D."/>
            <person name="Torroja C.F."/>
            <person name="Torrance J."/>
            <person name="Berthelot C."/>
            <person name="Muffato M."/>
            <person name="Collins J.E."/>
            <person name="Humphray S."/>
            <person name="McLaren K."/>
            <person name="Matthews L."/>
            <person name="McLaren S."/>
            <person name="Sealy I."/>
            <person name="Caccamo M."/>
            <person name="Churcher C."/>
            <person name="Scott C."/>
            <person name="Barrett J.C."/>
            <person name="Koch R."/>
            <person name="Rauch G.J."/>
            <person name="White S."/>
            <person name="Chow W."/>
            <person name="Kilian B."/>
            <person name="Quintais L.T."/>
            <person name="Guerra-Assuncao J.A."/>
            <person name="Zhou Y."/>
            <person name="Gu Y."/>
            <person name="Yen J."/>
            <person name="Vogel J.H."/>
            <person name="Eyre T."/>
            <person name="Redmond S."/>
            <person name="Banerjee R."/>
            <person name="Chi J."/>
            <person name="Fu B."/>
            <person name="Langley E."/>
            <person name="Maguire S.F."/>
            <person name="Laird G.K."/>
            <person name="Lloyd D."/>
            <person name="Kenyon E."/>
            <person name="Donaldson S."/>
            <person name="Sehra H."/>
            <person name="Almeida-King J."/>
            <person name="Loveland J."/>
            <person name="Trevanion S."/>
            <person name="Jones M."/>
            <person name="Quail M."/>
            <person name="Willey D."/>
            <person name="Hunt A."/>
            <person name="Burton J."/>
            <person name="Sims S."/>
            <person name="McLay K."/>
            <person name="Plumb B."/>
            <person name="Davis J."/>
            <person name="Clee C."/>
            <person name="Oliver K."/>
            <person name="Clark R."/>
            <person name="Riddle C."/>
            <person name="Elliot D."/>
            <person name="Threadgold G."/>
            <person name="Harden G."/>
            <person name="Ware D."/>
            <person name="Begum S."/>
            <person name="Mortimore B."/>
            <person name="Kerry G."/>
            <person name="Heath P."/>
            <person name="Phillimore B."/>
            <person name="Tracey A."/>
            <person name="Corby N."/>
            <person name="Dunn M."/>
            <person name="Johnson C."/>
            <person name="Wood J."/>
            <person name="Clark S."/>
            <person name="Pelan S."/>
            <person name="Griffiths G."/>
            <person name="Smith M."/>
            <person name="Glithero R."/>
            <person name="Howden P."/>
            <person name="Barker N."/>
            <person name="Lloyd C."/>
            <person name="Stevens C."/>
            <person name="Harley J."/>
            <person name="Holt K."/>
            <person name="Panagiotidis G."/>
            <person name="Lovell J."/>
            <person name="Beasley H."/>
            <person name="Henderson C."/>
            <person name="Gordon D."/>
            <person name="Auger K."/>
            <person name="Wright D."/>
            <person name="Collins J."/>
            <person name="Raisen C."/>
            <person name="Dyer L."/>
            <person name="Leung K."/>
            <person name="Robertson L."/>
            <person name="Ambridge K."/>
            <person name="Leongamornlert D."/>
            <person name="McGuire S."/>
            <person name="Gilderthorp R."/>
            <person name="Griffiths C."/>
            <person name="Manthravadi D."/>
            <person name="Nichol S."/>
            <person name="Barker G."/>
            <person name="Whitehead S."/>
            <person name="Kay M."/>
            <person name="Brown J."/>
            <person name="Murnane C."/>
            <person name="Gray E."/>
            <person name="Humphries M."/>
            <person name="Sycamore N."/>
            <person name="Barker D."/>
            <person name="Saunders D."/>
            <person name="Wallis J."/>
            <person name="Babbage A."/>
            <person name="Hammond S."/>
            <person name="Mashreghi-Mohammadi M."/>
            <person name="Barr L."/>
            <person name="Martin S."/>
            <person name="Wray P."/>
            <person name="Ellington A."/>
            <person name="Matthews N."/>
            <person name="Ellwood M."/>
            <person name="Woodmansey R."/>
            <person name="Clark G."/>
            <person name="Cooper J."/>
            <person name="Tromans A."/>
            <person name="Grafham D."/>
            <person name="Skuce C."/>
            <person name="Pandian R."/>
            <person name="Andrews R."/>
            <person name="Harrison E."/>
            <person name="Kimberley A."/>
            <person name="Garnett J."/>
            <person name="Fosker N."/>
            <person name="Hall R."/>
            <person name="Garner P."/>
            <person name="Kelly D."/>
            <person name="Bird C."/>
            <person name="Palmer S."/>
            <person name="Gehring I."/>
            <person name="Berger A."/>
            <person name="Dooley C.M."/>
            <person name="Ersan-Urun Z."/>
            <person name="Eser C."/>
            <person name="Geiger H."/>
            <person name="Geisler M."/>
            <person name="Karotki L."/>
            <person name="Kirn A."/>
            <person name="Konantz J."/>
            <person name="Konantz M."/>
            <person name="Oberlander M."/>
            <person name="Rudolph-Geiger S."/>
            <person name="Teucke M."/>
            <person name="Lanz C."/>
            <person name="Raddatz G."/>
            <person name="Osoegawa K."/>
            <person name="Zhu B."/>
            <person name="Rapp A."/>
            <person name="Widaa S."/>
            <person name="Langford C."/>
            <person name="Yang F."/>
            <person name="Schuster S.C."/>
            <person name="Carter N.P."/>
            <person name="Harrow J."/>
            <person name="Ning Z."/>
            <person name="Herrero J."/>
            <person name="Searle S.M."/>
            <person name="Enright A."/>
            <person name="Geisler R."/>
            <person name="Plasterk R.H."/>
            <person name="Lee C."/>
            <person name="Westerfield M."/>
            <person name="de Jong P.J."/>
            <person name="Zon L.I."/>
            <person name="Postlethwait J.H."/>
            <person name="Nusslein-Volhard C."/>
            <person name="Hubbard T.J."/>
            <person name="Roest Crollius H."/>
            <person name="Rogers J."/>
            <person name="Stemple D.L."/>
        </authorList>
    </citation>
    <scope>NUCLEOTIDE SEQUENCE [LARGE SCALE GENOMIC DNA]</scope>
    <source>
        <strain>Tuebingen</strain>
    </source>
</reference>
<reference key="2">
    <citation type="submission" date="2006-12" db="EMBL/GenBank/DDBJ databases">
        <authorList>
            <consortium name="NIH - Zebrafish Gene Collection (ZGC) project"/>
        </authorList>
    </citation>
    <scope>NUCLEOTIDE SEQUENCE [LARGE SCALE MRNA]</scope>
    <source>
        <tissue evidence="9">Embryo</tissue>
    </source>
</reference>
<reference key="3">
    <citation type="journal article" date="2015" name="Nat. Genet.">
        <title>Biallelic mutations in SNX14 cause a syndromic form of cerebellar atrophy and lysosome-autophagosome dysfunction.</title>
        <authorList>
            <person name="Akizu N."/>
            <person name="Cantagrel V."/>
            <person name="Zaki M.S."/>
            <person name="Al-Gazali L."/>
            <person name="Wang X."/>
            <person name="Rosti R.O."/>
            <person name="Dikoglu E."/>
            <person name="Gelot A.B."/>
            <person name="Rosti B."/>
            <person name="Vaux K.K."/>
            <person name="Scott E.M."/>
            <person name="Silhavy J.L."/>
            <person name="Schroth J."/>
            <person name="Copeland B."/>
            <person name="Schaffer A.E."/>
            <person name="Gordts P.L."/>
            <person name="Esko J.D."/>
            <person name="Buschman M.D."/>
            <person name="Field S.J."/>
            <person name="Napolitano G."/>
            <person name="Abdel-Salam G.M."/>
            <person name="Ozgul R.K."/>
            <person name="Sagiroglu M.S."/>
            <person name="Azam M."/>
            <person name="Ismail S."/>
            <person name="Aglan M."/>
            <person name="Selim L."/>
            <person name="Mahmoud I.G."/>
            <person name="Abdel-Hadi S."/>
            <person name="Badawy A.E."/>
            <person name="Sadek A.A."/>
            <person name="Mojahedi F."/>
            <person name="Kayserili H."/>
            <person name="Masri A."/>
            <person name="Bastaki L."/>
            <person name="Temtamy S."/>
            <person name="Mueller U."/>
            <person name="Desguerre I."/>
            <person name="Casanova J.L."/>
            <person name="Dursun A."/>
            <person name="Gunel M."/>
            <person name="Gabriel S.B."/>
            <person name="de Lonlay P."/>
            <person name="Gleeson J.G."/>
        </authorList>
    </citation>
    <scope>DISRUPTION PHENOTYPE</scope>
</reference>
<sequence length="934" mass="108143">MSDPHSFLGCVRRGLRFDMFKDVARQYPVIFCIFTVMISSTIILNQYLHILMVFWSFLAGVITFYCSLSPEYLLPNILISIKTKRKPQEQHELFPLGHSCAVCGKNQCKRHRPTLLLENYQPWLNLKVPSKVDASISEVLELVLENFVYPWYRDITDDEACVDELRQTIRFFAAVLAHRAQRVDVPSVVMDKMMKAAMKHIEIIAKAQQKVRNTDGLEQAALAEYGADLHVALRSRKDELLYLRKLTELLFPYVMPPKATDCRSLALLIREVMTGSVFLPIMDFVADPDTVNHMVLIFIDDSPPEPVTDPPSTLVPFLERFADPRTKKSSVLKLDLKEIREQQDLLFRFMSFLKEEGAVHVLQFCLTVEEFNDRILCPDLSDDEKQRLHEEVKKIYETYCLEESIDKISFDPFIIEEIHSIAEGPYTGVVKLQTMRCLFEAYEHVLCLLEKVFTPMFCHSDEYFRHLLCGAESPARNSKLNRNTSKRGESFGISRIGSKIKGVFKSSTMEGAMLPQYAMIEGEDDTVEEAVMVFEDDSPGPMDAVGTPGTLRNLSAWTISIPYVDFYDDEVKKERIPVFCIDVERNDRKNVGHETESWSVYRKYVEFYVLESKLTEFHGPFQDAQLPSKRIIGPKNYEFLSSKRGEFEEYLQKLLHHPELSNSQLLADFLSPFSMESQFRDKMLPDVNLGKIFKSVPGKLIKEKGQNLEPFIQSFFSSCESPKPKPSRPELTILSPTAENNKKLFNELYRNNANLPEGLEKKHNQNYFMELMEVDGAYDYMMYIGRVVFRMPDWLHHLLSGVRILLKRTLEAYVGHYFQYKLEQIMEEHRLVSLVTLLRDAVFCESTEERSPEDKQRRAKQTFEEMMNYLPDIVGKCIGEEAKYDGVKMLFNTIQQPLLNKQMTYVLLDIAIQELFPELSKNQKQGLSVSTRWM</sequence>
<keyword id="KW-0966">Cell projection</keyword>
<keyword id="KW-0967">Endosome</keyword>
<keyword id="KW-0458">Lysosome</keyword>
<keyword id="KW-0472">Membrane</keyword>
<keyword id="KW-1185">Reference proteome</keyword>
<keyword id="KW-0812">Transmembrane</keyword>
<keyword id="KW-1133">Transmembrane helix</keyword>
<dbReference type="EMBL" id="BX537259">
    <property type="status" value="NOT_ANNOTATED_CDS"/>
    <property type="molecule type" value="Genomic_DNA"/>
</dbReference>
<dbReference type="EMBL" id="BC129210">
    <property type="protein sequence ID" value="AAI29211.1"/>
    <property type="molecule type" value="mRNA"/>
</dbReference>
<dbReference type="RefSeq" id="XP_005160373.1">
    <property type="nucleotide sequence ID" value="XM_005160316.3"/>
</dbReference>
<dbReference type="SMR" id="Q5PNP1"/>
<dbReference type="FunCoup" id="Q5PNP1">
    <property type="interactions" value="1153"/>
</dbReference>
<dbReference type="STRING" id="7955.ENSDARP00000119620"/>
<dbReference type="PaxDb" id="7955-ENSDARP00000095495"/>
<dbReference type="Ensembl" id="ENSDART00000142361">
    <property type="protein sequence ID" value="ENSDARP00000119620"/>
    <property type="gene ID" value="ENSDARG00000006332"/>
</dbReference>
<dbReference type="GeneID" id="555970"/>
<dbReference type="AGR" id="ZFIN:ZDB-GENE-040724-144"/>
<dbReference type="CTD" id="57231"/>
<dbReference type="ZFIN" id="ZDB-GENE-040724-144">
    <property type="gene designation" value="snx14"/>
</dbReference>
<dbReference type="eggNOG" id="KOG2101">
    <property type="taxonomic scope" value="Eukaryota"/>
</dbReference>
<dbReference type="HOGENOM" id="CLU_014115_0_0_1"/>
<dbReference type="InParanoid" id="Q5PNP1"/>
<dbReference type="OrthoDB" id="5957963at2759"/>
<dbReference type="PRO" id="PR:Q5PNP1"/>
<dbReference type="Proteomes" id="UP000000437">
    <property type="component" value="Chromosome 20"/>
</dbReference>
<dbReference type="Bgee" id="ENSDARG00000006332">
    <property type="expression patterns" value="Expressed in mature ovarian follicle and 24 other cell types or tissues"/>
</dbReference>
<dbReference type="ExpressionAtlas" id="Q5PNP1">
    <property type="expression patterns" value="baseline and differential"/>
</dbReference>
<dbReference type="GO" id="GO:0030425">
    <property type="term" value="C:dendrite"/>
    <property type="evidence" value="ECO:0007669"/>
    <property type="project" value="UniProtKB-SubCell"/>
</dbReference>
<dbReference type="GO" id="GO:0005770">
    <property type="term" value="C:late endosome"/>
    <property type="evidence" value="ECO:0000250"/>
    <property type="project" value="UniProtKB"/>
</dbReference>
<dbReference type="GO" id="GO:0031902">
    <property type="term" value="C:late endosome membrane"/>
    <property type="evidence" value="ECO:0007669"/>
    <property type="project" value="UniProtKB-SubCell"/>
</dbReference>
<dbReference type="GO" id="GO:0005765">
    <property type="term" value="C:lysosomal membrane"/>
    <property type="evidence" value="ECO:0007669"/>
    <property type="project" value="UniProtKB-SubCell"/>
</dbReference>
<dbReference type="GO" id="GO:0005764">
    <property type="term" value="C:lysosome"/>
    <property type="evidence" value="ECO:0000250"/>
    <property type="project" value="UniProtKB"/>
</dbReference>
<dbReference type="GO" id="GO:0035091">
    <property type="term" value="F:phosphatidylinositol binding"/>
    <property type="evidence" value="ECO:0000318"/>
    <property type="project" value="GO_Central"/>
</dbReference>
<dbReference type="GO" id="GO:0080025">
    <property type="term" value="F:phosphatidylinositol-3,5-bisphosphate binding"/>
    <property type="evidence" value="ECO:0000250"/>
    <property type="project" value="UniProtKB"/>
</dbReference>
<dbReference type="GO" id="GO:0097352">
    <property type="term" value="P:autophagosome maturation"/>
    <property type="evidence" value="ECO:0000315"/>
    <property type="project" value="UniProtKB"/>
</dbReference>
<dbReference type="GO" id="GO:0006914">
    <property type="term" value="P:autophagy"/>
    <property type="evidence" value="ECO:0000315"/>
    <property type="project" value="ZFIN"/>
</dbReference>
<dbReference type="GO" id="GO:0021680">
    <property type="term" value="P:cerebellar Purkinje cell layer development"/>
    <property type="evidence" value="ECO:0000315"/>
    <property type="project" value="ZFIN"/>
</dbReference>
<dbReference type="GO" id="GO:0030902">
    <property type="term" value="P:hindbrain development"/>
    <property type="evidence" value="ECO:0000315"/>
    <property type="project" value="ZFIN"/>
</dbReference>
<dbReference type="CDD" id="cd06877">
    <property type="entry name" value="PX_SNX14"/>
    <property type="match status" value="1"/>
</dbReference>
<dbReference type="CDD" id="cd08722">
    <property type="entry name" value="RGS_SNX14"/>
    <property type="match status" value="1"/>
</dbReference>
<dbReference type="FunFam" id="1.10.167.10:FF:000004">
    <property type="entry name" value="sorting nexin-14 isoform X1"/>
    <property type="match status" value="1"/>
</dbReference>
<dbReference type="Gene3D" id="3.30.1520.10">
    <property type="entry name" value="Phox-like domain"/>
    <property type="match status" value="1"/>
</dbReference>
<dbReference type="Gene3D" id="1.10.167.10">
    <property type="entry name" value="Regulator of G-protein Signalling 4, domain 2"/>
    <property type="match status" value="1"/>
</dbReference>
<dbReference type="InterPro" id="IPR003114">
    <property type="entry name" value="Phox_assoc"/>
</dbReference>
<dbReference type="InterPro" id="IPR001683">
    <property type="entry name" value="PX_dom"/>
</dbReference>
<dbReference type="InterPro" id="IPR036871">
    <property type="entry name" value="PX_dom_sf"/>
</dbReference>
<dbReference type="InterPro" id="IPR016137">
    <property type="entry name" value="RGS"/>
</dbReference>
<dbReference type="InterPro" id="IPR036305">
    <property type="entry name" value="RGS_sf"/>
</dbReference>
<dbReference type="InterPro" id="IPR044926">
    <property type="entry name" value="RGS_subdomain_2"/>
</dbReference>
<dbReference type="InterPro" id="IPR037436">
    <property type="entry name" value="SNX14_PX"/>
</dbReference>
<dbReference type="InterPro" id="IPR037892">
    <property type="entry name" value="SNX14_RGS"/>
</dbReference>
<dbReference type="InterPro" id="IPR013937">
    <property type="entry name" value="Sorting_nexin_C"/>
</dbReference>
<dbReference type="PANTHER" id="PTHR22775">
    <property type="entry name" value="SORTING NEXIN"/>
    <property type="match status" value="1"/>
</dbReference>
<dbReference type="PANTHER" id="PTHR22775:SF44">
    <property type="entry name" value="SORTING NEXIN-14"/>
    <property type="match status" value="1"/>
</dbReference>
<dbReference type="Pfam" id="PF08628">
    <property type="entry name" value="Nexin_C"/>
    <property type="match status" value="1"/>
</dbReference>
<dbReference type="Pfam" id="PF00787">
    <property type="entry name" value="PX"/>
    <property type="match status" value="1"/>
</dbReference>
<dbReference type="Pfam" id="PF02194">
    <property type="entry name" value="PXA"/>
    <property type="match status" value="1"/>
</dbReference>
<dbReference type="Pfam" id="PF00615">
    <property type="entry name" value="RGS"/>
    <property type="match status" value="1"/>
</dbReference>
<dbReference type="SMART" id="SM00312">
    <property type="entry name" value="PX"/>
    <property type="match status" value="1"/>
</dbReference>
<dbReference type="SMART" id="SM00313">
    <property type="entry name" value="PXA"/>
    <property type="match status" value="1"/>
</dbReference>
<dbReference type="SMART" id="SM00315">
    <property type="entry name" value="RGS"/>
    <property type="match status" value="1"/>
</dbReference>
<dbReference type="SUPFAM" id="SSF64268">
    <property type="entry name" value="PX domain"/>
    <property type="match status" value="1"/>
</dbReference>
<dbReference type="SUPFAM" id="SSF48097">
    <property type="entry name" value="Regulator of G-protein signaling, RGS"/>
    <property type="match status" value="1"/>
</dbReference>
<dbReference type="PROSITE" id="PS50195">
    <property type="entry name" value="PX"/>
    <property type="match status" value="1"/>
</dbReference>
<dbReference type="PROSITE" id="PS51207">
    <property type="entry name" value="PXA"/>
    <property type="match status" value="1"/>
</dbReference>
<dbReference type="PROSITE" id="PS50132">
    <property type="entry name" value="RGS"/>
    <property type="match status" value="1"/>
</dbReference>
<accession>Q5PNP1</accession>
<accession>A1L1U0</accession>
<protein>
    <recommendedName>
        <fullName>Sorting nexin-14</fullName>
    </recommendedName>
</protein>
<evidence type="ECO:0000250" key="1">
    <source>
        <dbReference type="UniProtKB" id="Q8BHY8"/>
    </source>
</evidence>
<evidence type="ECO:0000250" key="2">
    <source>
        <dbReference type="UniProtKB" id="Q9Y5W7"/>
    </source>
</evidence>
<evidence type="ECO:0000255" key="3"/>
<evidence type="ECO:0000255" key="4">
    <source>
        <dbReference type="PROSITE-ProRule" id="PRU00147"/>
    </source>
</evidence>
<evidence type="ECO:0000255" key="5">
    <source>
        <dbReference type="PROSITE-ProRule" id="PRU00171"/>
    </source>
</evidence>
<evidence type="ECO:0000255" key="6">
    <source>
        <dbReference type="PROSITE-ProRule" id="PRU00553"/>
    </source>
</evidence>
<evidence type="ECO:0000269" key="7">
    <source>
    </source>
</evidence>
<evidence type="ECO:0000305" key="8"/>
<evidence type="ECO:0000312" key="9">
    <source>
        <dbReference type="EMBL" id="AAI29211.1"/>
    </source>
</evidence>
<evidence type="ECO:0000312" key="10">
    <source>
        <dbReference type="ZFIN" id="ZDB-GENE-040724-144"/>
    </source>
</evidence>
<proteinExistence type="evidence at transcript level"/>
<name>SNX14_DANRE</name>